<evidence type="ECO:0000255" key="1">
    <source>
        <dbReference type="HAMAP-Rule" id="MF_00981"/>
    </source>
</evidence>
<evidence type="ECO:0000255" key="2">
    <source>
        <dbReference type="PROSITE-ProRule" id="PRU00169"/>
    </source>
</evidence>
<dbReference type="EMBL" id="AE005674">
    <property type="protein sequence ID" value="AAN43819.2"/>
    <property type="molecule type" value="Genomic_DNA"/>
</dbReference>
<dbReference type="EMBL" id="AE014073">
    <property type="protein sequence ID" value="AAP17636.1"/>
    <property type="molecule type" value="Genomic_DNA"/>
</dbReference>
<dbReference type="RefSeq" id="NP_708112.2">
    <property type="nucleotide sequence ID" value="NC_004337.2"/>
</dbReference>
<dbReference type="RefSeq" id="WP_001061917.1">
    <property type="nucleotide sequence ID" value="NZ_WPGW01000116.1"/>
</dbReference>
<dbReference type="SMR" id="P69410"/>
<dbReference type="STRING" id="198214.SF2301"/>
<dbReference type="PaxDb" id="198214-SF2301"/>
<dbReference type="GeneID" id="1025149"/>
<dbReference type="GeneID" id="93774960"/>
<dbReference type="KEGG" id="sfl:SF2301"/>
<dbReference type="KEGG" id="sfx:S2432"/>
<dbReference type="PATRIC" id="fig|198214.7.peg.2756"/>
<dbReference type="HOGENOM" id="CLU_000445_90_1_6"/>
<dbReference type="Proteomes" id="UP000001006">
    <property type="component" value="Chromosome"/>
</dbReference>
<dbReference type="Proteomes" id="UP000002673">
    <property type="component" value="Chromosome"/>
</dbReference>
<dbReference type="GO" id="GO:0003677">
    <property type="term" value="F:DNA binding"/>
    <property type="evidence" value="ECO:0007669"/>
    <property type="project" value="UniProtKB-UniRule"/>
</dbReference>
<dbReference type="GO" id="GO:0000160">
    <property type="term" value="P:phosphorelay signal transduction system"/>
    <property type="evidence" value="ECO:0007669"/>
    <property type="project" value="UniProtKB-UniRule"/>
</dbReference>
<dbReference type="GO" id="GO:0006355">
    <property type="term" value="P:regulation of DNA-templated transcription"/>
    <property type="evidence" value="ECO:0007669"/>
    <property type="project" value="UniProtKB-UniRule"/>
</dbReference>
<dbReference type="CDD" id="cd06170">
    <property type="entry name" value="LuxR_C_like"/>
    <property type="match status" value="1"/>
</dbReference>
<dbReference type="CDD" id="cd17535">
    <property type="entry name" value="REC_NarL-like"/>
    <property type="match status" value="1"/>
</dbReference>
<dbReference type="FunFam" id="1.10.10.10:FF:000072">
    <property type="entry name" value="Transcriptional regulatory protein RcsB"/>
    <property type="match status" value="1"/>
</dbReference>
<dbReference type="FunFam" id="3.40.50.2300:FF:000023">
    <property type="entry name" value="Transcriptional regulatory protein RcsB"/>
    <property type="match status" value="1"/>
</dbReference>
<dbReference type="Gene3D" id="3.40.50.2300">
    <property type="match status" value="1"/>
</dbReference>
<dbReference type="Gene3D" id="1.10.10.10">
    <property type="entry name" value="Winged helix-like DNA-binding domain superfamily/Winged helix DNA-binding domain"/>
    <property type="match status" value="1"/>
</dbReference>
<dbReference type="HAMAP" id="MF_00981">
    <property type="entry name" value="RcsB"/>
    <property type="match status" value="1"/>
</dbReference>
<dbReference type="InterPro" id="IPR011006">
    <property type="entry name" value="CheY-like_superfamily"/>
</dbReference>
<dbReference type="InterPro" id="IPR030864">
    <property type="entry name" value="RcsB"/>
</dbReference>
<dbReference type="InterPro" id="IPR016032">
    <property type="entry name" value="Sig_transdc_resp-reg_C-effctor"/>
</dbReference>
<dbReference type="InterPro" id="IPR001789">
    <property type="entry name" value="Sig_transdc_resp-reg_receiver"/>
</dbReference>
<dbReference type="InterPro" id="IPR000792">
    <property type="entry name" value="Tscrpt_reg_LuxR_C"/>
</dbReference>
<dbReference type="InterPro" id="IPR039420">
    <property type="entry name" value="WalR-like"/>
</dbReference>
<dbReference type="InterPro" id="IPR036388">
    <property type="entry name" value="WH-like_DNA-bd_sf"/>
</dbReference>
<dbReference type="NCBIfam" id="NF008098">
    <property type="entry name" value="PRK10840.1"/>
    <property type="match status" value="1"/>
</dbReference>
<dbReference type="PANTHER" id="PTHR43214:SF17">
    <property type="entry name" value="TRANSCRIPTIONAL REGULATORY PROTEIN RCSB"/>
    <property type="match status" value="1"/>
</dbReference>
<dbReference type="PANTHER" id="PTHR43214">
    <property type="entry name" value="TWO-COMPONENT RESPONSE REGULATOR"/>
    <property type="match status" value="1"/>
</dbReference>
<dbReference type="Pfam" id="PF00196">
    <property type="entry name" value="GerE"/>
    <property type="match status" value="1"/>
</dbReference>
<dbReference type="Pfam" id="PF00072">
    <property type="entry name" value="Response_reg"/>
    <property type="match status" value="1"/>
</dbReference>
<dbReference type="PRINTS" id="PR00038">
    <property type="entry name" value="HTHLUXR"/>
</dbReference>
<dbReference type="SMART" id="SM00421">
    <property type="entry name" value="HTH_LUXR"/>
    <property type="match status" value="1"/>
</dbReference>
<dbReference type="SMART" id="SM00448">
    <property type="entry name" value="REC"/>
    <property type="match status" value="1"/>
</dbReference>
<dbReference type="SUPFAM" id="SSF46894">
    <property type="entry name" value="C-terminal effector domain of the bipartite response regulators"/>
    <property type="match status" value="1"/>
</dbReference>
<dbReference type="SUPFAM" id="SSF52172">
    <property type="entry name" value="CheY-like"/>
    <property type="match status" value="1"/>
</dbReference>
<dbReference type="PROSITE" id="PS00622">
    <property type="entry name" value="HTH_LUXR_1"/>
    <property type="match status" value="1"/>
</dbReference>
<dbReference type="PROSITE" id="PS50043">
    <property type="entry name" value="HTH_LUXR_2"/>
    <property type="match status" value="1"/>
</dbReference>
<dbReference type="PROSITE" id="PS50110">
    <property type="entry name" value="RESPONSE_REGULATORY"/>
    <property type="match status" value="1"/>
</dbReference>
<feature type="chain" id="PRO_0000081214" description="Transcriptional regulatory protein RcsB">
    <location>
        <begin position="1"/>
        <end position="216"/>
    </location>
</feature>
<feature type="domain" description="Response regulatory" evidence="2">
    <location>
        <begin position="5"/>
        <end position="124"/>
    </location>
</feature>
<feature type="domain" description="HTH luxR-type" evidence="1">
    <location>
        <begin position="144"/>
        <end position="209"/>
    </location>
</feature>
<feature type="DNA-binding region" description="H-T-H motif" evidence="1">
    <location>
        <begin position="168"/>
        <end position="187"/>
    </location>
</feature>
<feature type="modified residue" description="4-aspartylphosphate" evidence="1">
    <location>
        <position position="56"/>
    </location>
</feature>
<proteinExistence type="inferred from homology"/>
<protein>
    <recommendedName>
        <fullName evidence="1">Transcriptional regulatory protein RcsB</fullName>
    </recommendedName>
</protein>
<keyword id="KW-0238">DNA-binding</keyword>
<keyword id="KW-0597">Phosphoprotein</keyword>
<keyword id="KW-1185">Reference proteome</keyword>
<keyword id="KW-0804">Transcription</keyword>
<keyword id="KW-0805">Transcription regulation</keyword>
<keyword id="KW-0902">Two-component regulatory system</keyword>
<accession>P69410</accession>
<accession>P14374</accession>
<sequence length="216" mass="23671">MNNMNVIIADDHPIVLFGIRKSLEQIEWVNVVGEFEDSTALINNLPKLDAHVLITDLSMPGDKYGDGITLIKYIKRHFPSLSIIVLTMNNNPAILSAVLDLDIEGIVLKQGAPTDLPKALAALQKGKKFTPESVSRLLEKISAGGYGDKRLSPKESEVLRLFAEGFLVTEIAKKLNRSIKTISSQKKSAMMKLGVENDIALLNYLSSVTLSPADKD</sequence>
<comment type="function">
    <text evidence="1">Component of the Rcs signaling system, which controls transcription of numerous genes. RcsB is the response regulator that binds to regulatory DNA regions. Can function both in an RcsA-dependent or RcsA-independent manner.</text>
</comment>
<comment type="subunit">
    <text evidence="1">Interacts with RcsD and RcsA.</text>
</comment>
<comment type="PTM">
    <text evidence="1">Phosphorylated and activated by RcsD.</text>
</comment>
<comment type="similarity">
    <text evidence="1">Belongs to the RcsB family.</text>
</comment>
<organism>
    <name type="scientific">Shigella flexneri</name>
    <dbReference type="NCBI Taxonomy" id="623"/>
    <lineage>
        <taxon>Bacteria</taxon>
        <taxon>Pseudomonadati</taxon>
        <taxon>Pseudomonadota</taxon>
        <taxon>Gammaproteobacteria</taxon>
        <taxon>Enterobacterales</taxon>
        <taxon>Enterobacteriaceae</taxon>
        <taxon>Shigella</taxon>
    </lineage>
</organism>
<reference key="1">
    <citation type="journal article" date="2002" name="Nucleic Acids Res.">
        <title>Genome sequence of Shigella flexneri 2a: insights into pathogenicity through comparison with genomes of Escherichia coli K12 and O157.</title>
        <authorList>
            <person name="Jin Q."/>
            <person name="Yuan Z."/>
            <person name="Xu J."/>
            <person name="Wang Y."/>
            <person name="Shen Y."/>
            <person name="Lu W."/>
            <person name="Wang J."/>
            <person name="Liu H."/>
            <person name="Yang J."/>
            <person name="Yang F."/>
            <person name="Zhang X."/>
            <person name="Zhang J."/>
            <person name="Yang G."/>
            <person name="Wu H."/>
            <person name="Qu D."/>
            <person name="Dong J."/>
            <person name="Sun L."/>
            <person name="Xue Y."/>
            <person name="Zhao A."/>
            <person name="Gao Y."/>
            <person name="Zhu J."/>
            <person name="Kan B."/>
            <person name="Ding K."/>
            <person name="Chen S."/>
            <person name="Cheng H."/>
            <person name="Yao Z."/>
            <person name="He B."/>
            <person name="Chen R."/>
            <person name="Ma D."/>
            <person name="Qiang B."/>
            <person name="Wen Y."/>
            <person name="Hou Y."/>
            <person name="Yu J."/>
        </authorList>
    </citation>
    <scope>NUCLEOTIDE SEQUENCE [LARGE SCALE GENOMIC DNA]</scope>
    <source>
        <strain>301 / Serotype 2a</strain>
    </source>
</reference>
<reference key="2">
    <citation type="journal article" date="2003" name="Infect. Immun.">
        <title>Complete genome sequence and comparative genomics of Shigella flexneri serotype 2a strain 2457T.</title>
        <authorList>
            <person name="Wei J."/>
            <person name="Goldberg M.B."/>
            <person name="Burland V."/>
            <person name="Venkatesan M.M."/>
            <person name="Deng W."/>
            <person name="Fournier G."/>
            <person name="Mayhew G.F."/>
            <person name="Plunkett G. III"/>
            <person name="Rose D.J."/>
            <person name="Darling A."/>
            <person name="Mau B."/>
            <person name="Perna N.T."/>
            <person name="Payne S.M."/>
            <person name="Runyen-Janecky L.J."/>
            <person name="Zhou S."/>
            <person name="Schwartz D.C."/>
            <person name="Blattner F.R."/>
        </authorList>
    </citation>
    <scope>NUCLEOTIDE SEQUENCE [LARGE SCALE GENOMIC DNA]</scope>
    <source>
        <strain>ATCC 700930 / 2457T / Serotype 2a</strain>
    </source>
</reference>
<gene>
    <name evidence="1" type="primary">rcsB</name>
    <name type="ordered locus">SF2301</name>
    <name type="ordered locus">S2432</name>
</gene>
<name>RCSB_SHIFL</name>